<comment type="function">
    <text evidence="1">Specifically methylates the pseudouridine at position 1915 (m3Psi1915) in 23S rRNA.</text>
</comment>
<comment type="catalytic activity">
    <reaction evidence="1">
        <text>pseudouridine(1915) in 23S rRNA + S-adenosyl-L-methionine = N(3)-methylpseudouridine(1915) in 23S rRNA + S-adenosyl-L-homocysteine + H(+)</text>
        <dbReference type="Rhea" id="RHEA:42752"/>
        <dbReference type="Rhea" id="RHEA-COMP:10221"/>
        <dbReference type="Rhea" id="RHEA-COMP:10222"/>
        <dbReference type="ChEBI" id="CHEBI:15378"/>
        <dbReference type="ChEBI" id="CHEBI:57856"/>
        <dbReference type="ChEBI" id="CHEBI:59789"/>
        <dbReference type="ChEBI" id="CHEBI:65314"/>
        <dbReference type="ChEBI" id="CHEBI:74486"/>
        <dbReference type="EC" id="2.1.1.177"/>
    </reaction>
</comment>
<comment type="subunit">
    <text evidence="1">Homodimer.</text>
</comment>
<comment type="subcellular location">
    <subcellularLocation>
        <location evidence="1">Cytoplasm</location>
    </subcellularLocation>
</comment>
<comment type="similarity">
    <text evidence="1">Belongs to the RNA methyltransferase RlmH family.</text>
</comment>
<dbReference type="EC" id="2.1.1.177" evidence="1"/>
<dbReference type="EMBL" id="CP001078">
    <property type="protein sequence ID" value="ACD52618.1"/>
    <property type="molecule type" value="Genomic_DNA"/>
</dbReference>
<dbReference type="RefSeq" id="WP_012450724.1">
    <property type="nucleotide sequence ID" value="NC_010723.1"/>
</dbReference>
<dbReference type="SMR" id="B2V1Q9"/>
<dbReference type="KEGG" id="cbt:CLH_3342"/>
<dbReference type="HOGENOM" id="CLU_100552_0_0_9"/>
<dbReference type="GO" id="GO:0005737">
    <property type="term" value="C:cytoplasm"/>
    <property type="evidence" value="ECO:0007669"/>
    <property type="project" value="UniProtKB-SubCell"/>
</dbReference>
<dbReference type="GO" id="GO:0070038">
    <property type="term" value="F:rRNA (pseudouridine-N3-)-methyltransferase activity"/>
    <property type="evidence" value="ECO:0007669"/>
    <property type="project" value="UniProtKB-UniRule"/>
</dbReference>
<dbReference type="CDD" id="cd18081">
    <property type="entry name" value="RlmH-like"/>
    <property type="match status" value="1"/>
</dbReference>
<dbReference type="Gene3D" id="3.40.1280.10">
    <property type="match status" value="1"/>
</dbReference>
<dbReference type="HAMAP" id="MF_00658">
    <property type="entry name" value="23SrRNA_methyltr_H"/>
    <property type="match status" value="1"/>
</dbReference>
<dbReference type="InterPro" id="IPR029028">
    <property type="entry name" value="Alpha/beta_knot_MTases"/>
</dbReference>
<dbReference type="InterPro" id="IPR003742">
    <property type="entry name" value="RlmH-like"/>
</dbReference>
<dbReference type="InterPro" id="IPR029026">
    <property type="entry name" value="tRNA_m1G_MTases_N"/>
</dbReference>
<dbReference type="NCBIfam" id="NF000985">
    <property type="entry name" value="PRK00103.1-3"/>
    <property type="match status" value="1"/>
</dbReference>
<dbReference type="NCBIfam" id="TIGR00246">
    <property type="entry name" value="tRNA_RlmH_YbeA"/>
    <property type="match status" value="1"/>
</dbReference>
<dbReference type="PANTHER" id="PTHR33603">
    <property type="entry name" value="METHYLTRANSFERASE"/>
    <property type="match status" value="1"/>
</dbReference>
<dbReference type="PANTHER" id="PTHR33603:SF1">
    <property type="entry name" value="RIBOSOMAL RNA LARGE SUBUNIT METHYLTRANSFERASE H"/>
    <property type="match status" value="1"/>
</dbReference>
<dbReference type="Pfam" id="PF02590">
    <property type="entry name" value="SPOUT_MTase"/>
    <property type="match status" value="1"/>
</dbReference>
<dbReference type="PIRSF" id="PIRSF004505">
    <property type="entry name" value="MT_bac"/>
    <property type="match status" value="1"/>
</dbReference>
<dbReference type="SUPFAM" id="SSF75217">
    <property type="entry name" value="alpha/beta knot"/>
    <property type="match status" value="1"/>
</dbReference>
<evidence type="ECO:0000255" key="1">
    <source>
        <dbReference type="HAMAP-Rule" id="MF_00658"/>
    </source>
</evidence>
<keyword id="KW-0963">Cytoplasm</keyword>
<keyword id="KW-0489">Methyltransferase</keyword>
<keyword id="KW-0698">rRNA processing</keyword>
<keyword id="KW-0949">S-adenosyl-L-methionine</keyword>
<keyword id="KW-0808">Transferase</keyword>
<gene>
    <name evidence="1" type="primary">rlmH</name>
    <name type="ordered locus">CLH_3342</name>
</gene>
<feature type="chain" id="PRO_0000366579" description="Ribosomal RNA large subunit methyltransferase H">
    <location>
        <begin position="1"/>
        <end position="159"/>
    </location>
</feature>
<feature type="binding site" evidence="1">
    <location>
        <position position="76"/>
    </location>
    <ligand>
        <name>S-adenosyl-L-methionine</name>
        <dbReference type="ChEBI" id="CHEBI:59789"/>
    </ligand>
</feature>
<feature type="binding site" evidence="1">
    <location>
        <position position="108"/>
    </location>
    <ligand>
        <name>S-adenosyl-L-methionine</name>
        <dbReference type="ChEBI" id="CHEBI:59789"/>
    </ligand>
</feature>
<feature type="binding site" evidence="1">
    <location>
        <begin position="127"/>
        <end position="132"/>
    </location>
    <ligand>
        <name>S-adenosyl-L-methionine</name>
        <dbReference type="ChEBI" id="CHEBI:59789"/>
    </ligand>
</feature>
<accession>B2V1Q9</accession>
<reference key="1">
    <citation type="submission" date="2008-05" db="EMBL/GenBank/DDBJ databases">
        <title>Complete genome sequence of Clostridium botulinum E3 str. Alaska E43.</title>
        <authorList>
            <person name="Brinkac L.M."/>
            <person name="Brown J.L."/>
            <person name="Bruce D."/>
            <person name="Detter C."/>
            <person name="Munk C."/>
            <person name="Smith L.A."/>
            <person name="Smith T.J."/>
            <person name="Sutton G."/>
            <person name="Brettin T.S."/>
        </authorList>
    </citation>
    <scope>NUCLEOTIDE SEQUENCE [LARGE SCALE GENOMIC DNA]</scope>
    <source>
        <strain>Alaska E43 / Type E3</strain>
    </source>
</reference>
<organism>
    <name type="scientific">Clostridium botulinum (strain Alaska E43 / Type E3)</name>
    <dbReference type="NCBI Taxonomy" id="508767"/>
    <lineage>
        <taxon>Bacteria</taxon>
        <taxon>Bacillati</taxon>
        <taxon>Bacillota</taxon>
        <taxon>Clostridia</taxon>
        <taxon>Eubacteriales</taxon>
        <taxon>Clostridiaceae</taxon>
        <taxon>Clostridium</taxon>
    </lineage>
</organism>
<sequence>MNITIISVGKLKEKYLKHAIDEYSKRLSRYCKLNIVELQDEQTPDNASEKDELIIKDKEGNKILNSIKDNMYVITLDLKGKMISSEELSKFIDNCGVRGNSNLCFIIGGSLGLSEAVLKRSNYSLCFSKMTFPHQLFRVMLLEQIYRAFRISNGEPYHK</sequence>
<proteinExistence type="inferred from homology"/>
<name>RLMH_CLOBA</name>
<protein>
    <recommendedName>
        <fullName evidence="1">Ribosomal RNA large subunit methyltransferase H</fullName>
        <ecNumber evidence="1">2.1.1.177</ecNumber>
    </recommendedName>
    <alternativeName>
        <fullName evidence="1">23S rRNA (pseudouridine1915-N3)-methyltransferase</fullName>
    </alternativeName>
    <alternativeName>
        <fullName evidence="1">23S rRNA m3Psi1915 methyltransferase</fullName>
    </alternativeName>
    <alternativeName>
        <fullName evidence="1">rRNA (pseudouridine-N3-)-methyltransferase RlmH</fullName>
    </alternativeName>
</protein>